<sequence length="231" mass="25316">MMTTLTARPEAITFDPQQTALIVVDMQNAYATPGGYLDLAGFDVSTTRPVIANIQTAVTAARAAGMLIIWFQNGWDAQYVEAGGPGSPNFHKSNALKTMRKQPQLQGKLLAKGSWDYQLVDELVPQPGDIVLPKPRYSGFFNTPLDSILRSRGIRHLVFTGIATNVCVESTLRDGFFLEYFGVVLEDATHQAGPEFAQKAALFNIETFFGWVSDVETFCDALSPTSFARIA</sequence>
<protein>
    <recommendedName>
        <fullName evidence="1">Ureidoacrylate amidohydrolase RutB</fullName>
        <ecNumber evidence="1">3.5.1.110</ecNumber>
    </recommendedName>
</protein>
<reference key="1">
    <citation type="journal article" date="2008" name="J. Bacteriol.">
        <title>Insights into the environmental resistance gene pool from the genome sequence of the multidrug-resistant environmental isolate Escherichia coli SMS-3-5.</title>
        <authorList>
            <person name="Fricke W.F."/>
            <person name="Wright M.S."/>
            <person name="Lindell A.H."/>
            <person name="Harkins D.M."/>
            <person name="Baker-Austin C."/>
            <person name="Ravel J."/>
            <person name="Stepanauskas R."/>
        </authorList>
    </citation>
    <scope>NUCLEOTIDE SEQUENCE [LARGE SCALE GENOMIC DNA]</scope>
    <source>
        <strain>SMS-3-5 / SECEC</strain>
    </source>
</reference>
<dbReference type="EC" id="3.5.1.110" evidence="1"/>
<dbReference type="EMBL" id="CP000970">
    <property type="protein sequence ID" value="ACB19014.1"/>
    <property type="molecule type" value="Genomic_DNA"/>
</dbReference>
<dbReference type="SMR" id="B1LIZ4"/>
<dbReference type="KEGG" id="ecm:EcSMS35_2114"/>
<dbReference type="HOGENOM" id="CLU_068979_8_0_6"/>
<dbReference type="Proteomes" id="UP000007011">
    <property type="component" value="Chromosome"/>
</dbReference>
<dbReference type="GO" id="GO:0016811">
    <property type="term" value="F:hydrolase activity, acting on carbon-nitrogen (but not peptide) bonds, in linear amides"/>
    <property type="evidence" value="ECO:0007669"/>
    <property type="project" value="UniProtKB-UniRule"/>
</dbReference>
<dbReference type="GO" id="GO:0019740">
    <property type="term" value="P:nitrogen utilization"/>
    <property type="evidence" value="ECO:0007669"/>
    <property type="project" value="UniProtKB-UniRule"/>
</dbReference>
<dbReference type="GO" id="GO:0006212">
    <property type="term" value="P:uracil catabolic process"/>
    <property type="evidence" value="ECO:0007669"/>
    <property type="project" value="UniProtKB-UniRule"/>
</dbReference>
<dbReference type="CDD" id="cd00431">
    <property type="entry name" value="cysteine_hydrolases"/>
    <property type="match status" value="1"/>
</dbReference>
<dbReference type="FunFam" id="3.40.50.850:FF:000004">
    <property type="entry name" value="Peroxyureidoacrylate/ureidoacrylate amidohydrolase RutB"/>
    <property type="match status" value="1"/>
</dbReference>
<dbReference type="Gene3D" id="3.40.50.850">
    <property type="entry name" value="Isochorismatase-like"/>
    <property type="match status" value="1"/>
</dbReference>
<dbReference type="HAMAP" id="MF_00830">
    <property type="entry name" value="RutB"/>
    <property type="match status" value="1"/>
</dbReference>
<dbReference type="InterPro" id="IPR000868">
    <property type="entry name" value="Isochorismatase-like_dom"/>
</dbReference>
<dbReference type="InterPro" id="IPR050272">
    <property type="entry name" value="Isochorismatase-like_hydrls"/>
</dbReference>
<dbReference type="InterPro" id="IPR036380">
    <property type="entry name" value="Isochorismatase-like_sf"/>
</dbReference>
<dbReference type="InterPro" id="IPR019916">
    <property type="entry name" value="RutB"/>
</dbReference>
<dbReference type="NCBIfam" id="TIGR03614">
    <property type="entry name" value="RutB"/>
    <property type="match status" value="1"/>
</dbReference>
<dbReference type="PANTHER" id="PTHR43540:SF6">
    <property type="entry name" value="ISOCHORISMATASE-LIKE DOMAIN-CONTAINING PROTEIN"/>
    <property type="match status" value="1"/>
</dbReference>
<dbReference type="PANTHER" id="PTHR43540">
    <property type="entry name" value="PEROXYUREIDOACRYLATE/UREIDOACRYLATE AMIDOHYDROLASE-RELATED"/>
    <property type="match status" value="1"/>
</dbReference>
<dbReference type="Pfam" id="PF00857">
    <property type="entry name" value="Isochorismatase"/>
    <property type="match status" value="1"/>
</dbReference>
<dbReference type="SUPFAM" id="SSF52499">
    <property type="entry name" value="Isochorismatase-like hydrolases"/>
    <property type="match status" value="1"/>
</dbReference>
<keyword id="KW-0378">Hydrolase</keyword>
<name>RUTB_ECOSM</name>
<feature type="chain" id="PRO_0000402665" description="Ureidoacrylate amidohydrolase RutB">
    <location>
        <begin position="1"/>
        <end position="231"/>
    </location>
</feature>
<feature type="active site" description="Proton acceptor" evidence="1">
    <location>
        <position position="25"/>
    </location>
</feature>
<feature type="active site" evidence="1">
    <location>
        <position position="134"/>
    </location>
</feature>
<feature type="active site" description="Nucleophile" evidence="1">
    <location>
        <position position="167"/>
    </location>
</feature>
<accession>B1LIZ4</accession>
<organism>
    <name type="scientific">Escherichia coli (strain SMS-3-5 / SECEC)</name>
    <dbReference type="NCBI Taxonomy" id="439855"/>
    <lineage>
        <taxon>Bacteria</taxon>
        <taxon>Pseudomonadati</taxon>
        <taxon>Pseudomonadota</taxon>
        <taxon>Gammaproteobacteria</taxon>
        <taxon>Enterobacterales</taxon>
        <taxon>Enterobacteriaceae</taxon>
        <taxon>Escherichia</taxon>
    </lineage>
</organism>
<evidence type="ECO:0000255" key="1">
    <source>
        <dbReference type="HAMAP-Rule" id="MF_00830"/>
    </source>
</evidence>
<gene>
    <name evidence="1" type="primary">rutB</name>
    <name type="ordered locus">EcSMS35_2114</name>
</gene>
<comment type="function">
    <text evidence="1">Hydrolyzes ureidoacrylate to form aminoacrylate and carbamate. The carbamate hydrolyzes spontaneously, thereby releasing one of the nitrogen atoms of the pyrimidine ring as ammonia and one of its carbon atoms as CO2.</text>
</comment>
<comment type="catalytic activity">
    <reaction evidence="1">
        <text>(Z)-3-ureidoacrylate + H2O + H(+) = (Z)-3-aminoacrylate + NH4(+) + CO2</text>
        <dbReference type="Rhea" id="RHEA:42624"/>
        <dbReference type="ChEBI" id="CHEBI:15377"/>
        <dbReference type="ChEBI" id="CHEBI:15378"/>
        <dbReference type="ChEBI" id="CHEBI:16526"/>
        <dbReference type="ChEBI" id="CHEBI:28938"/>
        <dbReference type="ChEBI" id="CHEBI:59891"/>
        <dbReference type="ChEBI" id="CHEBI:59894"/>
        <dbReference type="EC" id="3.5.1.110"/>
    </reaction>
</comment>
<comment type="catalytic activity">
    <reaction evidence="1">
        <text>(Z)-3-ureidoacrylate + H2O = (Z)-3-aminoacrylate + carbamate + H(+)</text>
        <dbReference type="Rhea" id="RHEA:31603"/>
        <dbReference type="ChEBI" id="CHEBI:13941"/>
        <dbReference type="ChEBI" id="CHEBI:15377"/>
        <dbReference type="ChEBI" id="CHEBI:15378"/>
        <dbReference type="ChEBI" id="CHEBI:59891"/>
        <dbReference type="ChEBI" id="CHEBI:59894"/>
    </reaction>
</comment>
<comment type="catalytic activity">
    <reaction evidence="1">
        <text>(Z)-2-methylureidoacrylate + H2O + H(+) = (Z)-2-methylaminoacrylate + NH4(+) + CO2</text>
        <dbReference type="Rhea" id="RHEA:42620"/>
        <dbReference type="ChEBI" id="CHEBI:15377"/>
        <dbReference type="ChEBI" id="CHEBI:15378"/>
        <dbReference type="ChEBI" id="CHEBI:16526"/>
        <dbReference type="ChEBI" id="CHEBI:28938"/>
        <dbReference type="ChEBI" id="CHEBI:143783"/>
        <dbReference type="ChEBI" id="CHEBI:145735"/>
        <dbReference type="EC" id="3.5.1.110"/>
    </reaction>
</comment>
<comment type="induction">
    <text evidence="1">Up-regulated by the nitrogen regulatory protein C (NtrC also called GlnG) and repressed by RutR.</text>
</comment>
<comment type="similarity">
    <text evidence="1">Belongs to the isochorismatase family. RutB subfamily.</text>
</comment>
<proteinExistence type="inferred from homology"/>